<dbReference type="EMBL" id="AK032875">
    <property type="protein sequence ID" value="BAC28065.1"/>
    <property type="molecule type" value="mRNA"/>
</dbReference>
<dbReference type="EMBL" id="AK013932">
    <property type="protein sequence ID" value="BAB29065.1"/>
    <property type="molecule type" value="mRNA"/>
</dbReference>
<dbReference type="EMBL" id="AK019815">
    <property type="protein sequence ID" value="BAB31861.1"/>
    <property type="molecule type" value="mRNA"/>
</dbReference>
<dbReference type="EMBL" id="AK168759">
    <property type="protein sequence ID" value="BAE40596.1"/>
    <property type="status" value="ALT_INIT"/>
    <property type="molecule type" value="mRNA"/>
</dbReference>
<dbReference type="EMBL" id="AL844530">
    <property type="status" value="NOT_ANNOTATED_CDS"/>
    <property type="molecule type" value="Genomic_DNA"/>
</dbReference>
<dbReference type="EMBL" id="CH466542">
    <property type="protein sequence ID" value="EDL07938.1"/>
    <property type="molecule type" value="Genomic_DNA"/>
</dbReference>
<dbReference type="EMBL" id="BC021353">
    <property type="protein sequence ID" value="AAH21353.1"/>
    <property type="molecule type" value="mRNA"/>
</dbReference>
<dbReference type="CCDS" id="CCDS15655.1"/>
<dbReference type="RefSeq" id="NP_001405173.1">
    <property type="nucleotide sequence ID" value="NM_001418244.1"/>
</dbReference>
<dbReference type="RefSeq" id="NP_079902.1">
    <property type="nucleotide sequence ID" value="NM_025626.5"/>
</dbReference>
<dbReference type="SMR" id="Q3TGF2"/>
<dbReference type="BioGRID" id="211545">
    <property type="interactions" value="6"/>
</dbReference>
<dbReference type="FunCoup" id="Q3TGF2">
    <property type="interactions" value="120"/>
</dbReference>
<dbReference type="IntAct" id="Q3TGF2">
    <property type="interactions" value="6"/>
</dbReference>
<dbReference type="STRING" id="10090.ENSMUSP00000027965"/>
<dbReference type="iPTMnet" id="Q3TGF2"/>
<dbReference type="PhosphoSitePlus" id="Q3TGF2"/>
<dbReference type="jPOST" id="Q3TGF2"/>
<dbReference type="PaxDb" id="10090-ENSMUSP00000027965"/>
<dbReference type="ProteomicsDB" id="275710"/>
<dbReference type="Pumba" id="Q3TGF2"/>
<dbReference type="Antibodypedia" id="50918">
    <property type="antibodies" value="53 antibodies from 10 providers"/>
</dbReference>
<dbReference type="DNASU" id="66540"/>
<dbReference type="Ensembl" id="ENSMUST00000027965.11">
    <property type="protein sequence ID" value="ENSMUSP00000027965.5"/>
    <property type="gene ID" value="ENSMUSG00000026655.16"/>
</dbReference>
<dbReference type="Ensembl" id="ENSMUST00000115053.9">
    <property type="protein sequence ID" value="ENSMUSP00000110705.3"/>
    <property type="gene ID" value="ENSMUSG00000026655.16"/>
</dbReference>
<dbReference type="Ensembl" id="ENSMUST00000115054.9">
    <property type="protein sequence ID" value="ENSMUSP00000110706.3"/>
    <property type="gene ID" value="ENSMUSG00000026655.16"/>
</dbReference>
<dbReference type="Ensembl" id="ENSMUST00000115055.9">
    <property type="protein sequence ID" value="ENSMUSP00000110707.3"/>
    <property type="gene ID" value="ENSMUSG00000026655.16"/>
</dbReference>
<dbReference type="GeneID" id="66540"/>
<dbReference type="KEGG" id="mmu:66540"/>
<dbReference type="UCSC" id="uc008iek.1">
    <property type="organism name" value="mouse"/>
</dbReference>
<dbReference type="AGR" id="MGI:1913790"/>
<dbReference type="CTD" id="83641"/>
<dbReference type="MGI" id="MGI:1913790">
    <property type="gene designation" value="Fam107b"/>
</dbReference>
<dbReference type="VEuPathDB" id="HostDB:ENSMUSG00000026655"/>
<dbReference type="eggNOG" id="ENOG502RY4N">
    <property type="taxonomic scope" value="Eukaryota"/>
</dbReference>
<dbReference type="GeneTree" id="ENSGT00390000011228"/>
<dbReference type="HOGENOM" id="CLU_122902_0_0_1"/>
<dbReference type="InParanoid" id="Q3TGF2"/>
<dbReference type="PhylomeDB" id="Q3TGF2"/>
<dbReference type="TreeFam" id="TF325943"/>
<dbReference type="BioGRID-ORCS" id="66540">
    <property type="hits" value="0 hits in 76 CRISPR screens"/>
</dbReference>
<dbReference type="ChiTaRS" id="Fam107b">
    <property type="organism name" value="mouse"/>
</dbReference>
<dbReference type="PRO" id="PR:Q3TGF2"/>
<dbReference type="Proteomes" id="UP000000589">
    <property type="component" value="Chromosome 2"/>
</dbReference>
<dbReference type="RNAct" id="Q3TGF2">
    <property type="molecule type" value="protein"/>
</dbReference>
<dbReference type="Bgee" id="ENSMUSG00000026655">
    <property type="expression patterns" value="Expressed in granulocyte and 258 other cell types or tissues"/>
</dbReference>
<dbReference type="ExpressionAtlas" id="Q3TGF2">
    <property type="expression patterns" value="baseline and differential"/>
</dbReference>
<dbReference type="GO" id="GO:0007605">
    <property type="term" value="P:sensory perception of sound"/>
    <property type="evidence" value="ECO:0000315"/>
    <property type="project" value="MGI"/>
</dbReference>
<dbReference type="InterPro" id="IPR009533">
    <property type="entry name" value="FAM107"/>
</dbReference>
<dbReference type="PANTHER" id="PTHR16768">
    <property type="entry name" value="DOWN REGULATED IN RENAL CARCINOMA 1/TU3A"/>
    <property type="match status" value="1"/>
</dbReference>
<dbReference type="PANTHER" id="PTHR16768:SF1">
    <property type="entry name" value="PROTEIN FAM107B"/>
    <property type="match status" value="1"/>
</dbReference>
<dbReference type="Pfam" id="PF06625">
    <property type="entry name" value="DUF1151"/>
    <property type="match status" value="1"/>
</dbReference>
<reference key="1">
    <citation type="journal article" date="2005" name="Science">
        <title>The transcriptional landscape of the mammalian genome.</title>
        <authorList>
            <person name="Carninci P."/>
            <person name="Kasukawa T."/>
            <person name="Katayama S."/>
            <person name="Gough J."/>
            <person name="Frith M.C."/>
            <person name="Maeda N."/>
            <person name="Oyama R."/>
            <person name="Ravasi T."/>
            <person name="Lenhard B."/>
            <person name="Wells C."/>
            <person name="Kodzius R."/>
            <person name="Shimokawa K."/>
            <person name="Bajic V.B."/>
            <person name="Brenner S.E."/>
            <person name="Batalov S."/>
            <person name="Forrest A.R."/>
            <person name="Zavolan M."/>
            <person name="Davis M.J."/>
            <person name="Wilming L.G."/>
            <person name="Aidinis V."/>
            <person name="Allen J.E."/>
            <person name="Ambesi-Impiombato A."/>
            <person name="Apweiler R."/>
            <person name="Aturaliya R.N."/>
            <person name="Bailey T.L."/>
            <person name="Bansal M."/>
            <person name="Baxter L."/>
            <person name="Beisel K.W."/>
            <person name="Bersano T."/>
            <person name="Bono H."/>
            <person name="Chalk A.M."/>
            <person name="Chiu K.P."/>
            <person name="Choudhary V."/>
            <person name="Christoffels A."/>
            <person name="Clutterbuck D.R."/>
            <person name="Crowe M.L."/>
            <person name="Dalla E."/>
            <person name="Dalrymple B.P."/>
            <person name="de Bono B."/>
            <person name="Della Gatta G."/>
            <person name="di Bernardo D."/>
            <person name="Down T."/>
            <person name="Engstrom P."/>
            <person name="Fagiolini M."/>
            <person name="Faulkner G."/>
            <person name="Fletcher C.F."/>
            <person name="Fukushima T."/>
            <person name="Furuno M."/>
            <person name="Futaki S."/>
            <person name="Gariboldi M."/>
            <person name="Georgii-Hemming P."/>
            <person name="Gingeras T.R."/>
            <person name="Gojobori T."/>
            <person name="Green R.E."/>
            <person name="Gustincich S."/>
            <person name="Harbers M."/>
            <person name="Hayashi Y."/>
            <person name="Hensch T.K."/>
            <person name="Hirokawa N."/>
            <person name="Hill D."/>
            <person name="Huminiecki L."/>
            <person name="Iacono M."/>
            <person name="Ikeo K."/>
            <person name="Iwama A."/>
            <person name="Ishikawa T."/>
            <person name="Jakt M."/>
            <person name="Kanapin A."/>
            <person name="Katoh M."/>
            <person name="Kawasawa Y."/>
            <person name="Kelso J."/>
            <person name="Kitamura H."/>
            <person name="Kitano H."/>
            <person name="Kollias G."/>
            <person name="Krishnan S.P."/>
            <person name="Kruger A."/>
            <person name="Kummerfeld S.K."/>
            <person name="Kurochkin I.V."/>
            <person name="Lareau L.F."/>
            <person name="Lazarevic D."/>
            <person name="Lipovich L."/>
            <person name="Liu J."/>
            <person name="Liuni S."/>
            <person name="McWilliam S."/>
            <person name="Madan Babu M."/>
            <person name="Madera M."/>
            <person name="Marchionni L."/>
            <person name="Matsuda H."/>
            <person name="Matsuzawa S."/>
            <person name="Miki H."/>
            <person name="Mignone F."/>
            <person name="Miyake S."/>
            <person name="Morris K."/>
            <person name="Mottagui-Tabar S."/>
            <person name="Mulder N."/>
            <person name="Nakano N."/>
            <person name="Nakauchi H."/>
            <person name="Ng P."/>
            <person name="Nilsson R."/>
            <person name="Nishiguchi S."/>
            <person name="Nishikawa S."/>
            <person name="Nori F."/>
            <person name="Ohara O."/>
            <person name="Okazaki Y."/>
            <person name="Orlando V."/>
            <person name="Pang K.C."/>
            <person name="Pavan W.J."/>
            <person name="Pavesi G."/>
            <person name="Pesole G."/>
            <person name="Petrovsky N."/>
            <person name="Piazza S."/>
            <person name="Reed J."/>
            <person name="Reid J.F."/>
            <person name="Ring B.Z."/>
            <person name="Ringwald M."/>
            <person name="Rost B."/>
            <person name="Ruan Y."/>
            <person name="Salzberg S.L."/>
            <person name="Sandelin A."/>
            <person name="Schneider C."/>
            <person name="Schoenbach C."/>
            <person name="Sekiguchi K."/>
            <person name="Semple C.A."/>
            <person name="Seno S."/>
            <person name="Sessa L."/>
            <person name="Sheng Y."/>
            <person name="Shibata Y."/>
            <person name="Shimada H."/>
            <person name="Shimada K."/>
            <person name="Silva D."/>
            <person name="Sinclair B."/>
            <person name="Sperling S."/>
            <person name="Stupka E."/>
            <person name="Sugiura K."/>
            <person name="Sultana R."/>
            <person name="Takenaka Y."/>
            <person name="Taki K."/>
            <person name="Tammoja K."/>
            <person name="Tan S.L."/>
            <person name="Tang S."/>
            <person name="Taylor M.S."/>
            <person name="Tegner J."/>
            <person name="Teichmann S.A."/>
            <person name="Ueda H.R."/>
            <person name="van Nimwegen E."/>
            <person name="Verardo R."/>
            <person name="Wei C.L."/>
            <person name="Yagi K."/>
            <person name="Yamanishi H."/>
            <person name="Zabarovsky E."/>
            <person name="Zhu S."/>
            <person name="Zimmer A."/>
            <person name="Hide W."/>
            <person name="Bult C."/>
            <person name="Grimmond S.M."/>
            <person name="Teasdale R.D."/>
            <person name="Liu E.T."/>
            <person name="Brusic V."/>
            <person name="Quackenbush J."/>
            <person name="Wahlestedt C."/>
            <person name="Mattick J.S."/>
            <person name="Hume D.A."/>
            <person name="Kai C."/>
            <person name="Sasaki D."/>
            <person name="Tomaru Y."/>
            <person name="Fukuda S."/>
            <person name="Kanamori-Katayama M."/>
            <person name="Suzuki M."/>
            <person name="Aoki J."/>
            <person name="Arakawa T."/>
            <person name="Iida J."/>
            <person name="Imamura K."/>
            <person name="Itoh M."/>
            <person name="Kato T."/>
            <person name="Kawaji H."/>
            <person name="Kawagashira N."/>
            <person name="Kawashima T."/>
            <person name="Kojima M."/>
            <person name="Kondo S."/>
            <person name="Konno H."/>
            <person name="Nakano K."/>
            <person name="Ninomiya N."/>
            <person name="Nishio T."/>
            <person name="Okada M."/>
            <person name="Plessy C."/>
            <person name="Shibata K."/>
            <person name="Shiraki T."/>
            <person name="Suzuki S."/>
            <person name="Tagami M."/>
            <person name="Waki K."/>
            <person name="Watahiki A."/>
            <person name="Okamura-Oho Y."/>
            <person name="Suzuki H."/>
            <person name="Kawai J."/>
            <person name="Hayashizaki Y."/>
        </authorList>
    </citation>
    <scope>NUCLEOTIDE SEQUENCE [LARGE SCALE MRNA]</scope>
    <source>
        <strain>C57BL/6J</strain>
        <tissue>Head</tissue>
        <tissue>Heart</tissue>
        <tissue>Testis</tissue>
        <tissue>Wolffian duct</tissue>
    </source>
</reference>
<reference key="2">
    <citation type="journal article" date="2009" name="PLoS Biol.">
        <title>Lineage-specific biology revealed by a finished genome assembly of the mouse.</title>
        <authorList>
            <person name="Church D.M."/>
            <person name="Goodstadt L."/>
            <person name="Hillier L.W."/>
            <person name="Zody M.C."/>
            <person name="Goldstein S."/>
            <person name="She X."/>
            <person name="Bult C.J."/>
            <person name="Agarwala R."/>
            <person name="Cherry J.L."/>
            <person name="DiCuccio M."/>
            <person name="Hlavina W."/>
            <person name="Kapustin Y."/>
            <person name="Meric P."/>
            <person name="Maglott D."/>
            <person name="Birtle Z."/>
            <person name="Marques A.C."/>
            <person name="Graves T."/>
            <person name="Zhou S."/>
            <person name="Teague B."/>
            <person name="Potamousis K."/>
            <person name="Churas C."/>
            <person name="Place M."/>
            <person name="Herschleb J."/>
            <person name="Runnheim R."/>
            <person name="Forrest D."/>
            <person name="Amos-Landgraf J."/>
            <person name="Schwartz D.C."/>
            <person name="Cheng Z."/>
            <person name="Lindblad-Toh K."/>
            <person name="Eichler E.E."/>
            <person name="Ponting C.P."/>
        </authorList>
    </citation>
    <scope>NUCLEOTIDE SEQUENCE [LARGE SCALE GENOMIC DNA]</scope>
    <source>
        <strain>C57BL/6J</strain>
    </source>
</reference>
<reference key="3">
    <citation type="submission" date="2005-07" db="EMBL/GenBank/DDBJ databases">
        <authorList>
            <person name="Mural R.J."/>
            <person name="Adams M.D."/>
            <person name="Myers E.W."/>
            <person name="Smith H.O."/>
            <person name="Venter J.C."/>
        </authorList>
    </citation>
    <scope>NUCLEOTIDE SEQUENCE [LARGE SCALE GENOMIC DNA]</scope>
</reference>
<reference key="4">
    <citation type="journal article" date="2004" name="Genome Res.">
        <title>The status, quality, and expansion of the NIH full-length cDNA project: the Mammalian Gene Collection (MGC).</title>
        <authorList>
            <consortium name="The MGC Project Team"/>
        </authorList>
    </citation>
    <scope>NUCLEOTIDE SEQUENCE [LARGE SCALE MRNA]</scope>
    <source>
        <strain>FVB/N-3</strain>
        <tissue>Mammary tumor</tissue>
    </source>
</reference>
<reference key="5">
    <citation type="journal article" date="2010" name="Cell">
        <title>A tissue-specific atlas of mouse protein phosphorylation and expression.</title>
        <authorList>
            <person name="Huttlin E.L."/>
            <person name="Jedrychowski M.P."/>
            <person name="Elias J.E."/>
            <person name="Goswami T."/>
            <person name="Rad R."/>
            <person name="Beausoleil S.A."/>
            <person name="Villen J."/>
            <person name="Haas W."/>
            <person name="Sowa M.E."/>
            <person name="Gygi S.P."/>
        </authorList>
    </citation>
    <scope>IDENTIFICATION BY MASS SPECTROMETRY [LARGE SCALE ANALYSIS]</scope>
    <source>
        <tissue>Brain</tissue>
        <tissue>Liver</tissue>
        <tissue>Spleen</tissue>
        <tissue>Testis</tissue>
    </source>
</reference>
<reference key="6">
    <citation type="journal article" date="2013" name="Mol. Cell">
        <title>SIRT5-mediated lysine desuccinylation impacts diverse metabolic pathways.</title>
        <authorList>
            <person name="Park J."/>
            <person name="Chen Y."/>
            <person name="Tishkoff D.X."/>
            <person name="Peng C."/>
            <person name="Tan M."/>
            <person name="Dai L."/>
            <person name="Xie Z."/>
            <person name="Zhang Y."/>
            <person name="Zwaans B.M."/>
            <person name="Skinner M.E."/>
            <person name="Lombard D.B."/>
            <person name="Zhao Y."/>
        </authorList>
    </citation>
    <scope>ACETYLATION [LARGE SCALE ANALYSIS] AT LYS-50</scope>
    <scope>IDENTIFICATION BY MASS SPECTROMETRY [LARGE SCALE ANALYSIS]</scope>
    <source>
        <tissue>Embryonic fibroblast</tissue>
    </source>
</reference>
<reference key="7">
    <citation type="journal article" date="2015" name="Neuroscience">
        <title>Deciphering the spatio-temporal expression and stress regulation of Fam107B, the paralog of the resilience-promoting protein DRR1 in the mouse brain.</title>
        <authorList>
            <person name="Masana M."/>
            <person name="Jukic M.M."/>
            <person name="Kretzschmar A."/>
            <person name="Wagner K.V."/>
            <person name="Westerholz S."/>
            <person name="Schmidt M.V."/>
            <person name="Rein T."/>
            <person name="Brodski C."/>
            <person name="Mueller M.B."/>
        </authorList>
    </citation>
    <scope>TISSUE SPECIFICITY</scope>
    <scope>DEVELOPMENTAL STAGE</scope>
    <scope>ABSENCE OF INDUCTION</scope>
</reference>
<organism>
    <name type="scientific">Mus musculus</name>
    <name type="common">Mouse</name>
    <dbReference type="NCBI Taxonomy" id="10090"/>
    <lineage>
        <taxon>Eukaryota</taxon>
        <taxon>Metazoa</taxon>
        <taxon>Chordata</taxon>
        <taxon>Craniata</taxon>
        <taxon>Vertebrata</taxon>
        <taxon>Euteleostomi</taxon>
        <taxon>Mammalia</taxon>
        <taxon>Eutheria</taxon>
        <taxon>Euarchontoglires</taxon>
        <taxon>Glires</taxon>
        <taxon>Rodentia</taxon>
        <taxon>Myomorpha</taxon>
        <taxon>Muroidea</taxon>
        <taxon>Muridae</taxon>
        <taxon>Murinae</taxon>
        <taxon>Mus</taxon>
        <taxon>Mus</taxon>
    </lineage>
</organism>
<sequence length="131" mass="15572">MAEPDYIEDDNPELIRPQKLINPVKSSRNHQDLHRELLMNQKRGLAPQNKPELQKVMEKRRRDQVIKQKEEEAQKKKSDLEIELLKRQQKLEQLELEKQKLQEEQENAPEFVKVKGNLRRTGQEVAQAQES</sequence>
<comment type="tissue specificity">
    <text evidence="4">Expressed in the hippocampus and hypothalamus. Expressed in the pontine nuclei and reticulotegmental nucleus. Expressed in Purkinje cell and nuclear layers of the cerebelum. Expressed in the choroid plexus. Expressed in hippocampal granule neurons of the dente gyrus.</text>
</comment>
<comment type="developmental stage">
    <text evidence="4">Expressed in the developing brain embryo. Expressed in the mesencephalon in the tectum at 12.5 dpc and in the inferior colliculus at 16.5 dpc until birth. Expressed in the telencephalon in the ventricular zone, cortical plate, ganglionic eminence and hippocampus from 14.5 to 18.5 dpc. Expressed in the rhombencephalon in the pontine nuclei and in the external granule layer of the cerebellum at 16.5 and 18.5 dpc.</text>
</comment>
<comment type="induction">
    <text evidence="4">Is not up-regulated in the hippocampus by acute social defeat stress or glucocorticoids stimulation.</text>
</comment>
<comment type="similarity">
    <text evidence="5">Belongs to the FAM107 family.</text>
</comment>
<comment type="sequence caution" evidence="5">
    <conflict type="erroneous initiation">
        <sequence resource="EMBL-CDS" id="BAE40596"/>
    </conflict>
</comment>
<keyword id="KW-0007">Acetylation</keyword>
<keyword id="KW-0175">Coiled coil</keyword>
<keyword id="KW-1185">Reference proteome</keyword>
<proteinExistence type="evidence at protein level"/>
<gene>
    <name evidence="6" type="primary">Fam107b</name>
</gene>
<accession>Q3TGF2</accession>
<accession>Q9CR82</accession>
<evidence type="ECO:0000250" key="1">
    <source>
        <dbReference type="UniProtKB" id="Q9H098"/>
    </source>
</evidence>
<evidence type="ECO:0000255" key="2"/>
<evidence type="ECO:0000256" key="3">
    <source>
        <dbReference type="SAM" id="MobiDB-lite"/>
    </source>
</evidence>
<evidence type="ECO:0000269" key="4">
    <source>
    </source>
</evidence>
<evidence type="ECO:0000305" key="5"/>
<evidence type="ECO:0000312" key="6">
    <source>
        <dbReference type="MGI" id="MGI:1913790"/>
    </source>
</evidence>
<evidence type="ECO:0007744" key="7">
    <source>
    </source>
</evidence>
<feature type="initiator methionine" description="Removed" evidence="1">
    <location>
        <position position="1"/>
    </location>
</feature>
<feature type="chain" id="PRO_0000230775" description="Protein FAM107B">
    <location>
        <begin position="2"/>
        <end position="131"/>
    </location>
</feature>
<feature type="region of interest" description="Disordered" evidence="3">
    <location>
        <begin position="39"/>
        <end position="79"/>
    </location>
</feature>
<feature type="coiled-coil region" evidence="2">
    <location>
        <begin position="61"/>
        <end position="112"/>
    </location>
</feature>
<feature type="compositionally biased region" description="Basic and acidic residues" evidence="3">
    <location>
        <begin position="52"/>
        <end position="79"/>
    </location>
</feature>
<feature type="modified residue" description="N-acetylalanine" evidence="1">
    <location>
        <position position="2"/>
    </location>
</feature>
<feature type="modified residue" description="N6-acetyllysine" evidence="7">
    <location>
        <position position="50"/>
    </location>
</feature>
<protein>
    <recommendedName>
        <fullName evidence="5">Protein FAM107B</fullName>
    </recommendedName>
</protein>
<name>F107B_MOUSE</name>